<comment type="function">
    <text evidence="1">Involved in retrograde transport from early and late endosomes to late Golgi by linking the vesicle through the t-SNARE TGL1 to the Golgi, leading to the membrane fusion between late Golgi and endosomal vesicles. Also seems to be involved in protein transport from Golgi to the plasma membrane and is required for the integrity of the actin cytoskeleton (By similarity).</text>
</comment>
<comment type="subunit">
    <text evidence="1">Component of the Golgi-associated retrograde protein (GARP) complex, also called VFT (VPS fifty-three) complex.</text>
</comment>
<comment type="subcellular location">
    <subcellularLocation>
        <location evidence="4">Golgi apparatus</location>
        <location evidence="4">trans-Golgi network membrane</location>
        <topology evidence="4">Peripheral membrane protein</topology>
    </subcellularLocation>
    <subcellularLocation>
        <location evidence="1">Endosome membrane</location>
        <topology evidence="1">Peripheral membrane protein</topology>
    </subcellularLocation>
</comment>
<comment type="similarity">
    <text evidence="6">Belongs to the VPS54 family.</text>
</comment>
<name>VPS54_SCHPO</name>
<proteinExistence type="evidence at protein level"/>
<sequence>MERISSAPSISLGYPPTESSAHLAPSFSDSATSTLSFKSLLEDPVNPIRPVYTPTRTEITPVTLSPIPITPVREFQPYLHEISQEYARYSKQKRASLRRYLEKHGKLEGSMKESSINGSLLRRSSVSTILRPASESSYPNSNSETITYDIDDNVNPSSSLVDNFSISSVPSVFFQSDFNLDDPQIFDVVSEHIDITQTSDAPNSNRNLLLNNSMLQEKISWYLDTVELHLLQEIENASDSFPMIIDNLKQLKKETRDNVEETKHLLEKLTEVNVMCDRHMDAISSEELACHQLTQLKKVVQTLEDIYSEHKKVSEDVKDQRFLEAINGINSIVTQLKKKSTELNVDLLSLPSVKSLREEHKVLYHTVSQSVVQQFSKFLTSDMHKFSTILDSNELKDIYLSKNRLIPSVTKSLPSAMEFDADFLHEVDVCIDCLTLTDSLQAALTLYKTAVFEAFENLAQQYFTDGVEMRSVRKSSDLRRSLSAASLSSLSDSSRRSSSAANPFQSMSITEFAEMLTNIYFSSLECLRRIRSQIKVLIDILSKKDTKQYHLSVILNDLMATSSDVVTQQVTTINNLRFRVLDTYPPNNVIYLFSLHIIFHNELESLCGITQSSFIPTIMRQLLDWFKNFQRYSTQKLASSFERELWEAIPVEPSCQDLANRVFECSGNTPVEWTRLLSPEAEKEDENHRVHHVKVSEDCTATVSFGKQSLHIVRSSVTLLETLDDYGKLLAHFSRLAPEFQTGMLDMFRTLNSRVYQLILGAGTVRSSGLSKVLGKHIALASQTIALFQLSLNSMCRYLSRVTGTRLTNETNKLDQDFTVHHLQIHDKFVSLMRERVAISCSQIASLSWDIDSPHGYIIDLSKSLIKLYKVLHRYSQRDCVEVIPDVIRMFEDRLQLELTDIARNPSKWPGVRIDLSYFYDMMASKCGYAGDRTLLEKFERTPEQQEAA</sequence>
<gene>
    <name type="primary">vps54</name>
    <name type="ORF">SPAC2F3.10</name>
</gene>
<keyword id="KW-0175">Coiled coil</keyword>
<keyword id="KW-0967">Endosome</keyword>
<keyword id="KW-0333">Golgi apparatus</keyword>
<keyword id="KW-0472">Membrane</keyword>
<keyword id="KW-0597">Phosphoprotein</keyword>
<keyword id="KW-0653">Protein transport</keyword>
<keyword id="KW-1185">Reference proteome</keyword>
<keyword id="KW-0813">Transport</keyword>
<protein>
    <recommendedName>
        <fullName>Vacuolar protein sorting-associated protein 54</fullName>
    </recommendedName>
</protein>
<evidence type="ECO:0000250" key="1"/>
<evidence type="ECO:0000255" key="2"/>
<evidence type="ECO:0000256" key="3">
    <source>
        <dbReference type="SAM" id="MobiDB-lite"/>
    </source>
</evidence>
<evidence type="ECO:0000269" key="4">
    <source>
    </source>
</evidence>
<evidence type="ECO:0000269" key="5">
    <source>
    </source>
</evidence>
<evidence type="ECO:0000305" key="6"/>
<organism>
    <name type="scientific">Schizosaccharomyces pombe (strain 972 / ATCC 24843)</name>
    <name type="common">Fission yeast</name>
    <dbReference type="NCBI Taxonomy" id="284812"/>
    <lineage>
        <taxon>Eukaryota</taxon>
        <taxon>Fungi</taxon>
        <taxon>Dikarya</taxon>
        <taxon>Ascomycota</taxon>
        <taxon>Taphrinomycotina</taxon>
        <taxon>Schizosaccharomycetes</taxon>
        <taxon>Schizosaccharomycetales</taxon>
        <taxon>Schizosaccharomycetaceae</taxon>
        <taxon>Schizosaccharomyces</taxon>
    </lineage>
</organism>
<reference key="1">
    <citation type="journal article" date="2002" name="Nature">
        <title>The genome sequence of Schizosaccharomyces pombe.</title>
        <authorList>
            <person name="Wood V."/>
            <person name="Gwilliam R."/>
            <person name="Rajandream M.A."/>
            <person name="Lyne M.H."/>
            <person name="Lyne R."/>
            <person name="Stewart A."/>
            <person name="Sgouros J.G."/>
            <person name="Peat N."/>
            <person name="Hayles J."/>
            <person name="Baker S.G."/>
            <person name="Basham D."/>
            <person name="Bowman S."/>
            <person name="Brooks K."/>
            <person name="Brown D."/>
            <person name="Brown S."/>
            <person name="Chillingworth T."/>
            <person name="Churcher C.M."/>
            <person name="Collins M."/>
            <person name="Connor R."/>
            <person name="Cronin A."/>
            <person name="Davis P."/>
            <person name="Feltwell T."/>
            <person name="Fraser A."/>
            <person name="Gentles S."/>
            <person name="Goble A."/>
            <person name="Hamlin N."/>
            <person name="Harris D.E."/>
            <person name="Hidalgo J."/>
            <person name="Hodgson G."/>
            <person name="Holroyd S."/>
            <person name="Hornsby T."/>
            <person name="Howarth S."/>
            <person name="Huckle E.J."/>
            <person name="Hunt S."/>
            <person name="Jagels K."/>
            <person name="James K.D."/>
            <person name="Jones L."/>
            <person name="Jones M."/>
            <person name="Leather S."/>
            <person name="McDonald S."/>
            <person name="McLean J."/>
            <person name="Mooney P."/>
            <person name="Moule S."/>
            <person name="Mungall K.L."/>
            <person name="Murphy L.D."/>
            <person name="Niblett D."/>
            <person name="Odell C."/>
            <person name="Oliver K."/>
            <person name="O'Neil S."/>
            <person name="Pearson D."/>
            <person name="Quail M.A."/>
            <person name="Rabbinowitsch E."/>
            <person name="Rutherford K.M."/>
            <person name="Rutter S."/>
            <person name="Saunders D."/>
            <person name="Seeger K."/>
            <person name="Sharp S."/>
            <person name="Skelton J."/>
            <person name="Simmonds M.N."/>
            <person name="Squares R."/>
            <person name="Squares S."/>
            <person name="Stevens K."/>
            <person name="Taylor K."/>
            <person name="Taylor R.G."/>
            <person name="Tivey A."/>
            <person name="Walsh S.V."/>
            <person name="Warren T."/>
            <person name="Whitehead S."/>
            <person name="Woodward J.R."/>
            <person name="Volckaert G."/>
            <person name="Aert R."/>
            <person name="Robben J."/>
            <person name="Grymonprez B."/>
            <person name="Weltjens I."/>
            <person name="Vanstreels E."/>
            <person name="Rieger M."/>
            <person name="Schaefer M."/>
            <person name="Mueller-Auer S."/>
            <person name="Gabel C."/>
            <person name="Fuchs M."/>
            <person name="Duesterhoeft A."/>
            <person name="Fritzc C."/>
            <person name="Holzer E."/>
            <person name="Moestl D."/>
            <person name="Hilbert H."/>
            <person name="Borzym K."/>
            <person name="Langer I."/>
            <person name="Beck A."/>
            <person name="Lehrach H."/>
            <person name="Reinhardt R."/>
            <person name="Pohl T.M."/>
            <person name="Eger P."/>
            <person name="Zimmermann W."/>
            <person name="Wedler H."/>
            <person name="Wambutt R."/>
            <person name="Purnelle B."/>
            <person name="Goffeau A."/>
            <person name="Cadieu E."/>
            <person name="Dreano S."/>
            <person name="Gloux S."/>
            <person name="Lelaure V."/>
            <person name="Mottier S."/>
            <person name="Galibert F."/>
            <person name="Aves S.J."/>
            <person name="Xiang Z."/>
            <person name="Hunt C."/>
            <person name="Moore K."/>
            <person name="Hurst S.M."/>
            <person name="Lucas M."/>
            <person name="Rochet M."/>
            <person name="Gaillardin C."/>
            <person name="Tallada V.A."/>
            <person name="Garzon A."/>
            <person name="Thode G."/>
            <person name="Daga R.R."/>
            <person name="Cruzado L."/>
            <person name="Jimenez J."/>
            <person name="Sanchez M."/>
            <person name="del Rey F."/>
            <person name="Benito J."/>
            <person name="Dominguez A."/>
            <person name="Revuelta J.L."/>
            <person name="Moreno S."/>
            <person name="Armstrong J."/>
            <person name="Forsburg S.L."/>
            <person name="Cerutti L."/>
            <person name="Lowe T."/>
            <person name="McCombie W.R."/>
            <person name="Paulsen I."/>
            <person name="Potashkin J."/>
            <person name="Shpakovski G.V."/>
            <person name="Ussery D."/>
            <person name="Barrell B.G."/>
            <person name="Nurse P."/>
        </authorList>
    </citation>
    <scope>NUCLEOTIDE SEQUENCE [LARGE SCALE GENOMIC DNA]</scope>
    <source>
        <strain>972 / ATCC 24843</strain>
    </source>
</reference>
<reference key="2">
    <citation type="journal article" date="2006" name="Nat. Biotechnol.">
        <title>ORFeome cloning and global analysis of protein localization in the fission yeast Schizosaccharomyces pombe.</title>
        <authorList>
            <person name="Matsuyama A."/>
            <person name="Arai R."/>
            <person name="Yashiroda Y."/>
            <person name="Shirai A."/>
            <person name="Kamata A."/>
            <person name="Sekido S."/>
            <person name="Kobayashi Y."/>
            <person name="Hashimoto A."/>
            <person name="Hamamoto M."/>
            <person name="Hiraoka Y."/>
            <person name="Horinouchi S."/>
            <person name="Yoshida M."/>
        </authorList>
    </citation>
    <scope>SUBCELLULAR LOCATION [LARGE SCALE ANALYSIS]</scope>
</reference>
<reference key="3">
    <citation type="journal article" date="2008" name="J. Proteome Res.">
        <title>Phosphoproteome analysis of fission yeast.</title>
        <authorList>
            <person name="Wilson-Grady J.T."/>
            <person name="Villen J."/>
            <person name="Gygi S.P."/>
        </authorList>
    </citation>
    <scope>PHOSPHORYLATION [LARGE SCALE ANALYSIS] AT SER-483</scope>
    <scope>IDENTIFICATION BY MASS SPECTROMETRY</scope>
</reference>
<feature type="chain" id="PRO_0000339878" description="Vacuolar protein sorting-associated protein 54">
    <location>
        <begin position="1"/>
        <end position="949"/>
    </location>
</feature>
<feature type="region of interest" description="Disordered" evidence="3">
    <location>
        <begin position="1"/>
        <end position="25"/>
    </location>
</feature>
<feature type="coiled-coil region" evidence="2">
    <location>
        <begin position="243"/>
        <end position="312"/>
    </location>
</feature>
<feature type="modified residue" description="Phosphoserine" evidence="5">
    <location>
        <position position="483"/>
    </location>
</feature>
<dbReference type="EMBL" id="CU329670">
    <property type="protein sequence ID" value="CAB16266.1"/>
    <property type="molecule type" value="Genomic_DNA"/>
</dbReference>
<dbReference type="PIR" id="T38543">
    <property type="entry name" value="T38543"/>
</dbReference>
<dbReference type="RefSeq" id="NP_594389.1">
    <property type="nucleotide sequence ID" value="NM_001019811.2"/>
</dbReference>
<dbReference type="SMR" id="O14093"/>
<dbReference type="BioGRID" id="278219">
    <property type="interactions" value="1"/>
</dbReference>
<dbReference type="FunCoup" id="O14093">
    <property type="interactions" value="278"/>
</dbReference>
<dbReference type="STRING" id="284812.O14093"/>
<dbReference type="iPTMnet" id="O14093"/>
<dbReference type="PaxDb" id="4896-SPAC2F3.10.1"/>
<dbReference type="EnsemblFungi" id="SPAC2F3.10.1">
    <property type="protein sequence ID" value="SPAC2F3.10.1:pep"/>
    <property type="gene ID" value="SPAC2F3.10"/>
</dbReference>
<dbReference type="GeneID" id="2541725"/>
<dbReference type="KEGG" id="spo:2541725"/>
<dbReference type="PomBase" id="SPAC2F3.10">
    <property type="gene designation" value="vps54"/>
</dbReference>
<dbReference type="VEuPathDB" id="FungiDB:SPAC2F3.10"/>
<dbReference type="eggNOG" id="KOG2115">
    <property type="taxonomic scope" value="Eukaryota"/>
</dbReference>
<dbReference type="HOGENOM" id="CLU_003094_1_0_1"/>
<dbReference type="InParanoid" id="O14093"/>
<dbReference type="OMA" id="QWSKAFE"/>
<dbReference type="PhylomeDB" id="O14093"/>
<dbReference type="PRO" id="PR:O14093"/>
<dbReference type="Proteomes" id="UP000002485">
    <property type="component" value="Chromosome I"/>
</dbReference>
<dbReference type="GO" id="GO:0005737">
    <property type="term" value="C:cytoplasm"/>
    <property type="evidence" value="ECO:0007005"/>
    <property type="project" value="PomBase"/>
</dbReference>
<dbReference type="GO" id="GO:0005829">
    <property type="term" value="C:cytosol"/>
    <property type="evidence" value="ECO:0007669"/>
    <property type="project" value="GOC"/>
</dbReference>
<dbReference type="GO" id="GO:0010008">
    <property type="term" value="C:endosome membrane"/>
    <property type="evidence" value="ECO:0007669"/>
    <property type="project" value="UniProtKB-SubCell"/>
</dbReference>
<dbReference type="GO" id="GO:0000938">
    <property type="term" value="C:GARP complex"/>
    <property type="evidence" value="ECO:0000318"/>
    <property type="project" value="GO_Central"/>
</dbReference>
<dbReference type="GO" id="GO:0005794">
    <property type="term" value="C:Golgi apparatus"/>
    <property type="evidence" value="ECO:0007005"/>
    <property type="project" value="PomBase"/>
</dbReference>
<dbReference type="GO" id="GO:0019905">
    <property type="term" value="F:syntaxin binding"/>
    <property type="evidence" value="ECO:0000318"/>
    <property type="project" value="GO_Central"/>
</dbReference>
<dbReference type="GO" id="GO:0006896">
    <property type="term" value="P:Golgi to vacuole transport"/>
    <property type="evidence" value="ECO:0000318"/>
    <property type="project" value="GO_Central"/>
</dbReference>
<dbReference type="GO" id="GO:0006886">
    <property type="term" value="P:intracellular protein transport"/>
    <property type="evidence" value="ECO:0000305"/>
    <property type="project" value="PomBase"/>
</dbReference>
<dbReference type="GO" id="GO:0042147">
    <property type="term" value="P:retrograde transport, endosome to Golgi"/>
    <property type="evidence" value="ECO:0000318"/>
    <property type="project" value="GO_Central"/>
</dbReference>
<dbReference type="InterPro" id="IPR039745">
    <property type="entry name" value="Vps54"/>
</dbReference>
<dbReference type="InterPro" id="IPR012501">
    <property type="entry name" value="Vps54_C"/>
</dbReference>
<dbReference type="PANTHER" id="PTHR12965">
    <property type="entry name" value="VACUOLAR PROTEIN SORTING 54"/>
    <property type="match status" value="1"/>
</dbReference>
<dbReference type="PANTHER" id="PTHR12965:SF0">
    <property type="entry name" value="VACUOLAR PROTEIN SORTING-ASSOCIATED PROTEIN 54"/>
    <property type="match status" value="1"/>
</dbReference>
<dbReference type="Pfam" id="PF07928">
    <property type="entry name" value="Vps54"/>
    <property type="match status" value="1"/>
</dbReference>
<accession>O14093</accession>